<name>Y1378_CROS8</name>
<comment type="subcellular location">
    <subcellularLocation>
        <location evidence="1">Cytoplasm</location>
    </subcellularLocation>
</comment>
<comment type="similarity">
    <text evidence="1">Belongs to the TACO1 family.</text>
</comment>
<proteinExistence type="inferred from homology"/>
<gene>
    <name type="ordered locus">ESA_01378</name>
</gene>
<sequence length="246" mass="26275">MAGHSKWANTKHRKAAQDAKRGKIFTKIIRELVTAARLGGGDPGSNPRLRAAIDKALSNNMTRDTLNRAIARGVGGDEDANMETIIYEGYGPGGTAVMVECLSDNRNRTVAEVRHAFSKCGGNLGTDGSVAYLFSKKGVISFEAGDEDTIMEAALEAGAEDVVTYDDGAIDVYTAWEEMGAVRDALEAAGLKADNAEVSMIPSTKADMDAETAPKLLRLIDMLEDCDDVQEVYHNGEISDEVAATL</sequence>
<protein>
    <recommendedName>
        <fullName evidence="1">Probable transcriptional regulatory protein ESA_01378</fullName>
    </recommendedName>
</protein>
<feature type="chain" id="PRO_1000045306" description="Probable transcriptional regulatory protein ESA_01378">
    <location>
        <begin position="1"/>
        <end position="246"/>
    </location>
</feature>
<evidence type="ECO:0000255" key="1">
    <source>
        <dbReference type="HAMAP-Rule" id="MF_00693"/>
    </source>
</evidence>
<accession>A7MEB8</accession>
<reference key="1">
    <citation type="journal article" date="2010" name="PLoS ONE">
        <title>Genome sequence of Cronobacter sakazakii BAA-894 and comparative genomic hybridization analysis with other Cronobacter species.</title>
        <authorList>
            <person name="Kucerova E."/>
            <person name="Clifton S.W."/>
            <person name="Xia X.Q."/>
            <person name="Long F."/>
            <person name="Porwollik S."/>
            <person name="Fulton L."/>
            <person name="Fronick C."/>
            <person name="Minx P."/>
            <person name="Kyung K."/>
            <person name="Warren W."/>
            <person name="Fulton R."/>
            <person name="Feng D."/>
            <person name="Wollam A."/>
            <person name="Shah N."/>
            <person name="Bhonagiri V."/>
            <person name="Nash W.E."/>
            <person name="Hallsworth-Pepin K."/>
            <person name="Wilson R.K."/>
            <person name="McClelland M."/>
            <person name="Forsythe S.J."/>
        </authorList>
    </citation>
    <scope>NUCLEOTIDE SEQUENCE [LARGE SCALE GENOMIC DNA]</scope>
    <source>
        <strain>ATCC BAA-894</strain>
    </source>
</reference>
<organism>
    <name type="scientific">Cronobacter sakazakii (strain ATCC BAA-894)</name>
    <name type="common">Enterobacter sakazakii</name>
    <dbReference type="NCBI Taxonomy" id="290339"/>
    <lineage>
        <taxon>Bacteria</taxon>
        <taxon>Pseudomonadati</taxon>
        <taxon>Pseudomonadota</taxon>
        <taxon>Gammaproteobacteria</taxon>
        <taxon>Enterobacterales</taxon>
        <taxon>Enterobacteriaceae</taxon>
        <taxon>Cronobacter</taxon>
    </lineage>
</organism>
<keyword id="KW-0963">Cytoplasm</keyword>
<keyword id="KW-0238">DNA-binding</keyword>
<keyword id="KW-1185">Reference proteome</keyword>
<keyword id="KW-0804">Transcription</keyword>
<keyword id="KW-0805">Transcription regulation</keyword>
<dbReference type="EMBL" id="CP000783">
    <property type="protein sequence ID" value="ABU76638.1"/>
    <property type="molecule type" value="Genomic_DNA"/>
</dbReference>
<dbReference type="RefSeq" id="WP_004384823.1">
    <property type="nucleotide sequence ID" value="NC_009778.1"/>
</dbReference>
<dbReference type="SMR" id="A7MEB8"/>
<dbReference type="KEGG" id="esa:ESA_01378"/>
<dbReference type="HOGENOM" id="CLU_062974_2_2_6"/>
<dbReference type="Proteomes" id="UP000000260">
    <property type="component" value="Chromosome"/>
</dbReference>
<dbReference type="GO" id="GO:0005829">
    <property type="term" value="C:cytosol"/>
    <property type="evidence" value="ECO:0007669"/>
    <property type="project" value="TreeGrafter"/>
</dbReference>
<dbReference type="GO" id="GO:0003677">
    <property type="term" value="F:DNA binding"/>
    <property type="evidence" value="ECO:0007669"/>
    <property type="project" value="UniProtKB-UniRule"/>
</dbReference>
<dbReference type="GO" id="GO:0006355">
    <property type="term" value="P:regulation of DNA-templated transcription"/>
    <property type="evidence" value="ECO:0007669"/>
    <property type="project" value="UniProtKB-UniRule"/>
</dbReference>
<dbReference type="FunFam" id="1.10.10.200:FF:000001">
    <property type="entry name" value="Probable transcriptional regulatory protein YebC"/>
    <property type="match status" value="1"/>
</dbReference>
<dbReference type="FunFam" id="3.30.70.980:FF:000002">
    <property type="entry name" value="Probable transcriptional regulatory protein YebC"/>
    <property type="match status" value="1"/>
</dbReference>
<dbReference type="Gene3D" id="1.10.10.200">
    <property type="match status" value="1"/>
</dbReference>
<dbReference type="Gene3D" id="3.30.70.980">
    <property type="match status" value="2"/>
</dbReference>
<dbReference type="HAMAP" id="MF_00693">
    <property type="entry name" value="Transcrip_reg_TACO1"/>
    <property type="match status" value="1"/>
</dbReference>
<dbReference type="InterPro" id="IPR017856">
    <property type="entry name" value="Integrase-like_N"/>
</dbReference>
<dbReference type="InterPro" id="IPR048300">
    <property type="entry name" value="TACO1_YebC-like_2nd/3rd_dom"/>
</dbReference>
<dbReference type="InterPro" id="IPR049083">
    <property type="entry name" value="TACO1_YebC_N"/>
</dbReference>
<dbReference type="InterPro" id="IPR002876">
    <property type="entry name" value="Transcrip_reg_TACO1-like"/>
</dbReference>
<dbReference type="InterPro" id="IPR026564">
    <property type="entry name" value="Transcrip_reg_TACO1-like_dom3"/>
</dbReference>
<dbReference type="InterPro" id="IPR029072">
    <property type="entry name" value="YebC-like"/>
</dbReference>
<dbReference type="NCBIfam" id="NF001030">
    <property type="entry name" value="PRK00110.1"/>
    <property type="match status" value="1"/>
</dbReference>
<dbReference type="NCBIfam" id="NF009044">
    <property type="entry name" value="PRK12378.1"/>
    <property type="match status" value="1"/>
</dbReference>
<dbReference type="NCBIfam" id="TIGR01033">
    <property type="entry name" value="YebC/PmpR family DNA-binding transcriptional regulator"/>
    <property type="match status" value="1"/>
</dbReference>
<dbReference type="PANTHER" id="PTHR12532:SF6">
    <property type="entry name" value="TRANSCRIPTIONAL REGULATORY PROTEIN YEBC-RELATED"/>
    <property type="match status" value="1"/>
</dbReference>
<dbReference type="PANTHER" id="PTHR12532">
    <property type="entry name" value="TRANSLATIONAL ACTIVATOR OF CYTOCHROME C OXIDASE 1"/>
    <property type="match status" value="1"/>
</dbReference>
<dbReference type="Pfam" id="PF20772">
    <property type="entry name" value="TACO1_YebC_N"/>
    <property type="match status" value="1"/>
</dbReference>
<dbReference type="Pfam" id="PF01709">
    <property type="entry name" value="Transcrip_reg"/>
    <property type="match status" value="1"/>
</dbReference>
<dbReference type="SUPFAM" id="SSF75625">
    <property type="entry name" value="YebC-like"/>
    <property type="match status" value="1"/>
</dbReference>